<reference key="1">
    <citation type="journal article" date="2004" name="Nat. Genet.">
        <title>Mutations in HFE2 cause iron overload in chromosome 1q-linked juvenile hemochromatosis.</title>
        <authorList>
            <person name="Papanikolaou G."/>
            <person name="Samuels M.E."/>
            <person name="Ludwig E.H."/>
            <person name="MacDonald M.L.E."/>
            <person name="Franchini P.L."/>
            <person name="Dube M.-P."/>
            <person name="Andres L."/>
            <person name="MacFarlane J."/>
            <person name="Sakellaropoulos N."/>
            <person name="Politou M."/>
            <person name="Nemeth E."/>
            <person name="Thompson J."/>
            <person name="Risler J.K."/>
            <person name="Zaborowska C."/>
            <person name="Babakaiff R."/>
            <person name="Radomski C.C."/>
            <person name="Pape T.D."/>
            <person name="Davidas O."/>
            <person name="Christakis J."/>
            <person name="Brissot P."/>
            <person name="Lockitch G."/>
            <person name="Ganz T."/>
            <person name="Hayden M.R."/>
            <person name="Goldberg Y.P."/>
        </authorList>
    </citation>
    <scope>NUCLEOTIDE SEQUENCE [MRNA] (ISOFORM A)</scope>
    <scope>ALTERNATIVE SPLICING</scope>
    <scope>TISSUE SPECIFICITY</scope>
    <scope>VARIANTS HFE2A ASN-222 AND VAL-320</scope>
    <source>
        <tissue>Liver</tissue>
    </source>
</reference>
<reference key="2">
    <citation type="journal article" date="2004" name="Nat. Genet.">
        <title>Complete sequencing and characterization of 21,243 full-length human cDNAs.</title>
        <authorList>
            <person name="Ota T."/>
            <person name="Suzuki Y."/>
            <person name="Nishikawa T."/>
            <person name="Otsuki T."/>
            <person name="Sugiyama T."/>
            <person name="Irie R."/>
            <person name="Wakamatsu A."/>
            <person name="Hayashi K."/>
            <person name="Sato H."/>
            <person name="Nagai K."/>
            <person name="Kimura K."/>
            <person name="Makita H."/>
            <person name="Sekine M."/>
            <person name="Obayashi M."/>
            <person name="Nishi T."/>
            <person name="Shibahara T."/>
            <person name="Tanaka T."/>
            <person name="Ishii S."/>
            <person name="Yamamoto J."/>
            <person name="Saito K."/>
            <person name="Kawai Y."/>
            <person name="Isono Y."/>
            <person name="Nakamura Y."/>
            <person name="Nagahari K."/>
            <person name="Murakami K."/>
            <person name="Yasuda T."/>
            <person name="Iwayanagi T."/>
            <person name="Wagatsuma M."/>
            <person name="Shiratori A."/>
            <person name="Sudo H."/>
            <person name="Hosoiri T."/>
            <person name="Kaku Y."/>
            <person name="Kodaira H."/>
            <person name="Kondo H."/>
            <person name="Sugawara M."/>
            <person name="Takahashi M."/>
            <person name="Kanda K."/>
            <person name="Yokoi T."/>
            <person name="Furuya T."/>
            <person name="Kikkawa E."/>
            <person name="Omura Y."/>
            <person name="Abe K."/>
            <person name="Kamihara K."/>
            <person name="Katsuta N."/>
            <person name="Sato K."/>
            <person name="Tanikawa M."/>
            <person name="Yamazaki M."/>
            <person name="Ninomiya K."/>
            <person name="Ishibashi T."/>
            <person name="Yamashita H."/>
            <person name="Murakawa K."/>
            <person name="Fujimori K."/>
            <person name="Tanai H."/>
            <person name="Kimata M."/>
            <person name="Watanabe M."/>
            <person name="Hiraoka S."/>
            <person name="Chiba Y."/>
            <person name="Ishida S."/>
            <person name="Ono Y."/>
            <person name="Takiguchi S."/>
            <person name="Watanabe S."/>
            <person name="Yosida M."/>
            <person name="Hotuta T."/>
            <person name="Kusano J."/>
            <person name="Kanehori K."/>
            <person name="Takahashi-Fujii A."/>
            <person name="Hara H."/>
            <person name="Tanase T.-O."/>
            <person name="Nomura Y."/>
            <person name="Togiya S."/>
            <person name="Komai F."/>
            <person name="Hara R."/>
            <person name="Takeuchi K."/>
            <person name="Arita M."/>
            <person name="Imose N."/>
            <person name="Musashino K."/>
            <person name="Yuuki H."/>
            <person name="Oshima A."/>
            <person name="Sasaki N."/>
            <person name="Aotsuka S."/>
            <person name="Yoshikawa Y."/>
            <person name="Matsunawa H."/>
            <person name="Ichihara T."/>
            <person name="Shiohata N."/>
            <person name="Sano S."/>
            <person name="Moriya S."/>
            <person name="Momiyama H."/>
            <person name="Satoh N."/>
            <person name="Takami S."/>
            <person name="Terashima Y."/>
            <person name="Suzuki O."/>
            <person name="Nakagawa S."/>
            <person name="Senoh A."/>
            <person name="Mizoguchi H."/>
            <person name="Goto Y."/>
            <person name="Shimizu F."/>
            <person name="Wakebe H."/>
            <person name="Hishigaki H."/>
            <person name="Watanabe T."/>
            <person name="Sugiyama A."/>
            <person name="Takemoto M."/>
            <person name="Kawakami B."/>
            <person name="Yamazaki M."/>
            <person name="Watanabe K."/>
            <person name="Kumagai A."/>
            <person name="Itakura S."/>
            <person name="Fukuzumi Y."/>
            <person name="Fujimori Y."/>
            <person name="Komiyama M."/>
            <person name="Tashiro H."/>
            <person name="Tanigami A."/>
            <person name="Fujiwara T."/>
            <person name="Ono T."/>
            <person name="Yamada K."/>
            <person name="Fujii Y."/>
            <person name="Ozaki K."/>
            <person name="Hirao M."/>
            <person name="Ohmori Y."/>
            <person name="Kawabata A."/>
            <person name="Hikiji T."/>
            <person name="Kobatake N."/>
            <person name="Inagaki H."/>
            <person name="Ikema Y."/>
            <person name="Okamoto S."/>
            <person name="Okitani R."/>
            <person name="Kawakami T."/>
            <person name="Noguchi S."/>
            <person name="Itoh T."/>
            <person name="Shigeta K."/>
            <person name="Senba T."/>
            <person name="Matsumura K."/>
            <person name="Nakajima Y."/>
            <person name="Mizuno T."/>
            <person name="Morinaga M."/>
            <person name="Sasaki M."/>
            <person name="Togashi T."/>
            <person name="Oyama M."/>
            <person name="Hata H."/>
            <person name="Watanabe M."/>
            <person name="Komatsu T."/>
            <person name="Mizushima-Sugano J."/>
            <person name="Satoh T."/>
            <person name="Shirai Y."/>
            <person name="Takahashi Y."/>
            <person name="Nakagawa K."/>
            <person name="Okumura K."/>
            <person name="Nagase T."/>
            <person name="Nomura N."/>
            <person name="Kikuchi H."/>
            <person name="Masuho Y."/>
            <person name="Yamashita R."/>
            <person name="Nakai K."/>
            <person name="Yada T."/>
            <person name="Nakamura Y."/>
            <person name="Ohara O."/>
            <person name="Isogai T."/>
            <person name="Sugano S."/>
        </authorList>
    </citation>
    <scope>NUCLEOTIDE SEQUENCE [LARGE SCALE MRNA] (ISOFORMS A AND B)</scope>
    <source>
        <tissue>Liver</tissue>
        <tissue>Skeletal muscle</tissue>
    </source>
</reference>
<reference key="3">
    <citation type="submission" date="2005-11" db="EMBL/GenBank/DDBJ databases">
        <authorList>
            <consortium name="NIEHS SNPs program"/>
        </authorList>
    </citation>
    <scope>NUCLEOTIDE SEQUENCE [GENOMIC DNA]</scope>
</reference>
<reference key="4">
    <citation type="journal article" date="2006" name="Nature">
        <title>The DNA sequence and biological annotation of human chromosome 1.</title>
        <authorList>
            <person name="Gregory S.G."/>
            <person name="Barlow K.F."/>
            <person name="McLay K.E."/>
            <person name="Kaul R."/>
            <person name="Swarbreck D."/>
            <person name="Dunham A."/>
            <person name="Scott C.E."/>
            <person name="Howe K.L."/>
            <person name="Woodfine K."/>
            <person name="Spencer C.C.A."/>
            <person name="Jones M.C."/>
            <person name="Gillson C."/>
            <person name="Searle S."/>
            <person name="Zhou Y."/>
            <person name="Kokocinski F."/>
            <person name="McDonald L."/>
            <person name="Evans R."/>
            <person name="Phillips K."/>
            <person name="Atkinson A."/>
            <person name="Cooper R."/>
            <person name="Jones C."/>
            <person name="Hall R.E."/>
            <person name="Andrews T.D."/>
            <person name="Lloyd C."/>
            <person name="Ainscough R."/>
            <person name="Almeida J.P."/>
            <person name="Ambrose K.D."/>
            <person name="Anderson F."/>
            <person name="Andrew R.W."/>
            <person name="Ashwell R.I.S."/>
            <person name="Aubin K."/>
            <person name="Babbage A.K."/>
            <person name="Bagguley C.L."/>
            <person name="Bailey J."/>
            <person name="Beasley H."/>
            <person name="Bethel G."/>
            <person name="Bird C.P."/>
            <person name="Bray-Allen S."/>
            <person name="Brown J.Y."/>
            <person name="Brown A.J."/>
            <person name="Buckley D."/>
            <person name="Burton J."/>
            <person name="Bye J."/>
            <person name="Carder C."/>
            <person name="Chapman J.C."/>
            <person name="Clark S.Y."/>
            <person name="Clarke G."/>
            <person name="Clee C."/>
            <person name="Cobley V."/>
            <person name="Collier R.E."/>
            <person name="Corby N."/>
            <person name="Coville G.J."/>
            <person name="Davies J."/>
            <person name="Deadman R."/>
            <person name="Dunn M."/>
            <person name="Earthrowl M."/>
            <person name="Ellington A.G."/>
            <person name="Errington H."/>
            <person name="Frankish A."/>
            <person name="Frankland J."/>
            <person name="French L."/>
            <person name="Garner P."/>
            <person name="Garnett J."/>
            <person name="Gay L."/>
            <person name="Ghori M.R.J."/>
            <person name="Gibson R."/>
            <person name="Gilby L.M."/>
            <person name="Gillett W."/>
            <person name="Glithero R.J."/>
            <person name="Grafham D.V."/>
            <person name="Griffiths C."/>
            <person name="Griffiths-Jones S."/>
            <person name="Grocock R."/>
            <person name="Hammond S."/>
            <person name="Harrison E.S.I."/>
            <person name="Hart E."/>
            <person name="Haugen E."/>
            <person name="Heath P.D."/>
            <person name="Holmes S."/>
            <person name="Holt K."/>
            <person name="Howden P.J."/>
            <person name="Hunt A.R."/>
            <person name="Hunt S.E."/>
            <person name="Hunter G."/>
            <person name="Isherwood J."/>
            <person name="James R."/>
            <person name="Johnson C."/>
            <person name="Johnson D."/>
            <person name="Joy A."/>
            <person name="Kay M."/>
            <person name="Kershaw J.K."/>
            <person name="Kibukawa M."/>
            <person name="Kimberley A.M."/>
            <person name="King A."/>
            <person name="Knights A.J."/>
            <person name="Lad H."/>
            <person name="Laird G."/>
            <person name="Lawlor S."/>
            <person name="Leongamornlert D.A."/>
            <person name="Lloyd D.M."/>
            <person name="Loveland J."/>
            <person name="Lovell J."/>
            <person name="Lush M.J."/>
            <person name="Lyne R."/>
            <person name="Martin S."/>
            <person name="Mashreghi-Mohammadi M."/>
            <person name="Matthews L."/>
            <person name="Matthews N.S.W."/>
            <person name="McLaren S."/>
            <person name="Milne S."/>
            <person name="Mistry S."/>
            <person name="Moore M.J.F."/>
            <person name="Nickerson T."/>
            <person name="O'Dell C.N."/>
            <person name="Oliver K."/>
            <person name="Palmeiri A."/>
            <person name="Palmer S.A."/>
            <person name="Parker A."/>
            <person name="Patel D."/>
            <person name="Pearce A.V."/>
            <person name="Peck A.I."/>
            <person name="Pelan S."/>
            <person name="Phelps K."/>
            <person name="Phillimore B.J."/>
            <person name="Plumb R."/>
            <person name="Rajan J."/>
            <person name="Raymond C."/>
            <person name="Rouse G."/>
            <person name="Saenphimmachak C."/>
            <person name="Sehra H.K."/>
            <person name="Sheridan E."/>
            <person name="Shownkeen R."/>
            <person name="Sims S."/>
            <person name="Skuce C.D."/>
            <person name="Smith M."/>
            <person name="Steward C."/>
            <person name="Subramanian S."/>
            <person name="Sycamore N."/>
            <person name="Tracey A."/>
            <person name="Tromans A."/>
            <person name="Van Helmond Z."/>
            <person name="Wall M."/>
            <person name="Wallis J.M."/>
            <person name="White S."/>
            <person name="Whitehead S.L."/>
            <person name="Wilkinson J.E."/>
            <person name="Willey D.L."/>
            <person name="Williams H."/>
            <person name="Wilming L."/>
            <person name="Wray P.W."/>
            <person name="Wu Z."/>
            <person name="Coulson A."/>
            <person name="Vaudin M."/>
            <person name="Sulston J.E."/>
            <person name="Durbin R.M."/>
            <person name="Hubbard T."/>
            <person name="Wooster R."/>
            <person name="Dunham I."/>
            <person name="Carter N.P."/>
            <person name="McVean G."/>
            <person name="Ross M.T."/>
            <person name="Harrow J."/>
            <person name="Olson M.V."/>
            <person name="Beck S."/>
            <person name="Rogers J."/>
            <person name="Bentley D.R."/>
        </authorList>
    </citation>
    <scope>NUCLEOTIDE SEQUENCE [LARGE SCALE GENOMIC DNA]</scope>
</reference>
<reference key="5">
    <citation type="submission" date="2005-07" db="EMBL/GenBank/DDBJ databases">
        <authorList>
            <person name="Mural R.J."/>
            <person name="Istrail S."/>
            <person name="Sutton G.G."/>
            <person name="Florea L."/>
            <person name="Halpern A.L."/>
            <person name="Mobarry C.M."/>
            <person name="Lippert R."/>
            <person name="Walenz B."/>
            <person name="Shatkay H."/>
            <person name="Dew I."/>
            <person name="Miller J.R."/>
            <person name="Flanigan M.J."/>
            <person name="Edwards N.J."/>
            <person name="Bolanos R."/>
            <person name="Fasulo D."/>
            <person name="Halldorsson B.V."/>
            <person name="Hannenhalli S."/>
            <person name="Turner R."/>
            <person name="Yooseph S."/>
            <person name="Lu F."/>
            <person name="Nusskern D.R."/>
            <person name="Shue B.C."/>
            <person name="Zheng X.H."/>
            <person name="Zhong F."/>
            <person name="Delcher A.L."/>
            <person name="Huson D.H."/>
            <person name="Kravitz S.A."/>
            <person name="Mouchard L."/>
            <person name="Reinert K."/>
            <person name="Remington K.A."/>
            <person name="Clark A.G."/>
            <person name="Waterman M.S."/>
            <person name="Eichler E.E."/>
            <person name="Adams M.D."/>
            <person name="Hunkapiller M.W."/>
            <person name="Myers E.W."/>
            <person name="Venter J.C."/>
        </authorList>
    </citation>
    <scope>NUCLEOTIDE SEQUENCE [LARGE SCALE GENOMIC DNA]</scope>
</reference>
<reference key="6">
    <citation type="journal article" date="2004" name="Genome Res.">
        <title>The status, quality, and expansion of the NIH full-length cDNA project: the Mammalian Gene Collection (MGC).</title>
        <authorList>
            <consortium name="The MGC Project Team"/>
        </authorList>
    </citation>
    <scope>NUCLEOTIDE SEQUENCE [LARGE SCALE MRNA] (ISOFORMS B AND C)</scope>
    <source>
        <tissue>PNS</tissue>
        <tissue>Skeletal muscle</tissue>
    </source>
</reference>
<reference key="7">
    <citation type="journal article" date="2006" name="Nat. Genet.">
        <title>Bone morphogenetic protein signaling by hemojuvelin regulates hepcidin expression.</title>
        <authorList>
            <person name="Babitt J.L."/>
            <person name="Huang F.W."/>
            <person name="Wrighting D.M."/>
            <person name="Xia Y."/>
            <person name="Sidis Y."/>
            <person name="Samad T.A."/>
            <person name="Campagna J.A."/>
            <person name="Chung R.T."/>
            <person name="Schneyer A.L."/>
            <person name="Woolf C.J."/>
            <person name="Andrews N.C."/>
            <person name="Lin H.Y."/>
        </authorList>
    </citation>
    <scope>INTERACTION WITH BMPR1B</scope>
</reference>
<reference key="8">
    <citation type="journal article" date="2008" name="Cell Metab.">
        <title>The serine protease matriptase-2 (TMPRSS6) inhibits hepcidin activation by cleaving membrane hemojuvelin.</title>
        <authorList>
            <person name="Silvestri L."/>
            <person name="Pagani A."/>
            <person name="Nai A."/>
            <person name="De Domenico I."/>
            <person name="Kaplan J."/>
            <person name="Camaschella C."/>
        </authorList>
    </citation>
    <scope>FUNCTION</scope>
    <scope>INTERACTION WITH TMPRSS6</scope>
    <scope>PROTEOLYTIC PROCESSING</scope>
</reference>
<reference key="9">
    <citation type="journal article" date="2009" name="Blood">
        <title>Molecular mechanisms of the defective hepcidin inhibition in TMPRSS6 mutations associated with iron-refractory iron deficiency anemia.</title>
        <authorList>
            <person name="Silvestri L."/>
            <person name="Guillem F."/>
            <person name="Pagani A."/>
            <person name="Nai A."/>
            <person name="Oudin C."/>
            <person name="Silva M."/>
            <person name="Toutain F."/>
            <person name="Kannengiesser C."/>
            <person name="Beaumont C."/>
            <person name="Camaschella C."/>
            <person name="Grandchamp B."/>
        </authorList>
    </citation>
    <scope>INTERACTION WITH TMPRSS6</scope>
</reference>
<reference key="10">
    <citation type="journal article" date="2014" name="Hum. Mutat.">
        <title>Functional and clinical impact of novel TMPRSS6 variants in iron-refractory iron-deficiency anemia patients and genotype-phenotype studies.</title>
        <authorList>
            <person name="De Falco L."/>
            <person name="Silvestri L."/>
            <person name="Kannengiesser C."/>
            <person name="Moran E."/>
            <person name="Oudin C."/>
            <person name="Rausa M."/>
            <person name="Bruno M."/>
            <person name="Aranda J."/>
            <person name="Argiles B."/>
            <person name="Yenicesu I."/>
            <person name="Falcon-Rodriguez M."/>
            <person name="Yilmaz-Keskin E."/>
            <person name="Kocak U."/>
            <person name="Beaumont C."/>
            <person name="Camaschella C."/>
            <person name="Iolascon A."/>
            <person name="Grandchamp B."/>
            <person name="Sanchez M."/>
        </authorList>
    </citation>
    <scope>SUBCELLULAR LOCATION</scope>
    <scope>PROTEOLYTIC PROCESSING</scope>
</reference>
<reference key="11">
    <citation type="journal article" date="2004" name="Blood">
        <title>Spectrum of hemojuvelin gene mutations in 1q-linked juvenile hemochromatosis.</title>
        <authorList>
            <person name="Lanzara C."/>
            <person name="Roetto A."/>
            <person name="Daraio F."/>
            <person name="Rivard S."/>
            <person name="Ficarella R."/>
            <person name="Simard H."/>
            <person name="Cox T.M."/>
            <person name="Cazzola M."/>
            <person name="Piperno A."/>
            <person name="Gimenez-Roqueplo A.P."/>
            <person name="Grammatico P."/>
            <person name="Volinia S."/>
            <person name="Gasparini P."/>
            <person name="Camaschella C."/>
        </authorList>
    </citation>
    <scope>VARIANTS HFE2A PRO-85; ARG-99; ASP-168; SER-170; GLU-172; CYS-191; ARG-205; VAL-250; TRP-288 AND VAL-320</scope>
</reference>
<reference key="12">
    <citation type="journal article" date="2004" name="Blood">
        <title>Genetic abnormalities and juvenile hemochromatosis: mutations of the HJV gene encoding hemojuvelin.</title>
        <authorList>
            <person name="Lee P.L."/>
            <person name="Beutler E."/>
            <person name="Rao S.V."/>
            <person name="Barton J.C."/>
        </authorList>
    </citation>
    <scope>VARIANTS HFE2A ARG-80; PRO-101; ASN-222 AND VAL-320</scope>
</reference>
<reference key="13">
    <citation type="journal article" date="2004" name="Br. J. Haematol.">
        <title>Hemojuvelin (HJV) mutations in persons of European, African-American and Asian ancestry with adult onset haemochromatosis.</title>
        <authorList>
            <person name="Lee P.L."/>
            <person name="Barton J.C."/>
            <person name="Brandhagen D."/>
            <person name="Beutler E."/>
        </authorList>
    </citation>
    <scope>VARIANTS HFE2A VAL-320 AND TRP-321</scope>
</reference>
<name>RGMC_HUMAN</name>
<feature type="signal peptide" evidence="3">
    <location>
        <begin position="1"/>
        <end position="35"/>
    </location>
</feature>
<feature type="chain" id="PRO_0000030398" description="Hemojuvelin">
    <location>
        <begin position="36"/>
        <end position="400"/>
    </location>
</feature>
<feature type="propeptide" id="PRO_0000030399" description="Removed in mature form" evidence="3">
    <location>
        <begin position="401"/>
        <end position="426"/>
    </location>
</feature>
<feature type="region of interest" description="Disordered" evidence="4">
    <location>
        <begin position="119"/>
        <end position="142"/>
    </location>
</feature>
<feature type="site" description="Cleavage; by autolysis" evidence="1">
    <location>
        <begin position="172"/>
        <end position="173"/>
    </location>
</feature>
<feature type="modified residue" description="Phosphotyrosine" evidence="2">
    <location>
        <position position="46"/>
    </location>
</feature>
<feature type="lipid moiety-binding region" description="GPI-anchor amidated aspartate" evidence="3">
    <location>
        <position position="400"/>
    </location>
</feature>
<feature type="glycosylation site" description="N-linked (GlcNAc...) asparagine" evidence="3">
    <location>
        <position position="118"/>
    </location>
</feature>
<feature type="glycosylation site" description="N-linked (GlcNAc...) asparagine" evidence="3">
    <location>
        <position position="213"/>
    </location>
</feature>
<feature type="glycosylation site" description="N-linked (GlcNAc...) asparagine" evidence="3">
    <location>
        <position position="372"/>
    </location>
</feature>
<feature type="disulfide bond" evidence="1">
    <location>
        <begin position="148"/>
        <end position="230"/>
    </location>
</feature>
<feature type="disulfide bond" evidence="1">
    <location>
        <begin position="167"/>
        <end position="317"/>
    </location>
</feature>
<feature type="splice variant" id="VSP_011320" description="In isoform c." evidence="14">
    <location>
        <begin position="1"/>
        <end position="226"/>
    </location>
</feature>
<feature type="splice variant" id="VSP_011319" description="In isoform b." evidence="13 14">
    <location>
        <begin position="1"/>
        <end position="113"/>
    </location>
</feature>
<feature type="sequence variant" id="VAR_019617" description="In HFE2A; dbSNP:rs28940586." evidence="6">
    <original>C</original>
    <variation>R</variation>
    <location>
        <position position="80"/>
    </location>
</feature>
<feature type="sequence variant" id="VAR_019618" description="In HFE2A; dbSNP:rs1553769752." evidence="7">
    <original>S</original>
    <variation>P</variation>
    <location>
        <position position="85"/>
    </location>
</feature>
<feature type="sequence variant" id="VAR_019619" description="In HFE2A; dbSNP:rs1553769745." evidence="7">
    <original>G</original>
    <variation>R</variation>
    <location>
        <position position="99"/>
    </location>
</feature>
<feature type="sequence variant" id="VAR_019620" description="In HFE2A; dbSNP:rs74315327." evidence="6">
    <original>L</original>
    <variation>P</variation>
    <location>
        <position position="101"/>
    </location>
</feature>
<feature type="sequence variant" id="VAR_019621" description="In HFE2A; dbSNP:rs782125244." evidence="7">
    <original>A</original>
    <variation>D</variation>
    <location>
        <position position="168"/>
    </location>
</feature>
<feature type="sequence variant" id="VAR_019622" description="In HFE2A; dbSNP:rs1553769659." evidence="7">
    <original>F</original>
    <variation>S</variation>
    <location>
        <position position="170"/>
    </location>
</feature>
<feature type="sequence variant" id="VAR_019623" description="In HFE2A; dbSNP:rs782708481." evidence="7">
    <original>D</original>
    <variation>E</variation>
    <location>
        <position position="172"/>
    </location>
</feature>
<feature type="sequence variant" id="VAR_019624" description="In HFE2A; dbSNP:rs1553769634." evidence="7">
    <original>W</original>
    <variation>C</variation>
    <location>
        <position position="191"/>
    </location>
</feature>
<feature type="sequence variant" id="VAR_019625" description="In HFE2A; dbSNP:rs1553769627." evidence="7">
    <original>S</original>
    <variation>R</variation>
    <location>
        <position position="205"/>
    </location>
</feature>
<feature type="sequence variant" id="VAR_019626" description="In HFE2A; dbSNP:rs74315325." evidence="5 6">
    <original>I</original>
    <variation>N</variation>
    <location>
        <position position="222"/>
    </location>
</feature>
<feature type="sequence variant" id="VAR_019627" description="In HFE2A; dbSNP:rs863224819." evidence="7">
    <original>G</original>
    <variation>V</variation>
    <location>
        <position position="250"/>
    </location>
</feature>
<feature type="sequence variant" id="VAR_019628" description="In HFE2A; dbSNP:rs782493762." evidence="7">
    <original>R</original>
    <variation>W</variation>
    <location>
        <position position="288"/>
    </location>
</feature>
<feature type="sequence variant" id="VAR_053636" description="In dbSNP:rs7540883.">
    <original>A</original>
    <variation>G</variation>
    <location>
        <position position="310"/>
    </location>
</feature>
<feature type="sequence variant" id="VAR_019629" description="In HFE2A; dbSNP:rs74315323." evidence="5 6 7 8">
    <original>G</original>
    <variation>V</variation>
    <location>
        <position position="320"/>
    </location>
</feature>
<feature type="sequence variant" id="VAR_019927" description="In HFE2A; dbSNP:rs121434374." evidence="8">
    <original>C</original>
    <variation>W</variation>
    <location>
        <position position="321"/>
    </location>
</feature>
<feature type="sequence conflict" description="In Ref. 3; ABC40718." evidence="15" ref="3">
    <original>G</original>
    <variation>GG</variation>
    <location>
        <position position="69"/>
    </location>
</feature>
<feature type="sequence conflict" description="In Ref. 2; BAC03944." evidence="15" ref="2">
    <original>K</original>
    <variation>E</variation>
    <location>
        <position position="299"/>
    </location>
</feature>
<feature type="helix" evidence="17">
    <location>
        <begin position="39"/>
        <end position="51"/>
    </location>
</feature>
<feature type="helix" evidence="17">
    <location>
        <begin position="78"/>
        <end position="93"/>
    </location>
</feature>
<feature type="helix" evidence="17">
    <location>
        <begin position="94"/>
        <end position="96"/>
    </location>
</feature>
<feature type="helix" evidence="17">
    <location>
        <begin position="101"/>
        <end position="116"/>
    </location>
</feature>
<sequence>MGEPGQSPSPRSSHGSPPTLSTLTLLLLLCGHAHSQCKILRCNAEYVSSTLSLRGGGSSGALRGGGGGGRGGGVGSGGLCRALRSYALCTRRTARTCRGDLAFHSAVHGIEDLMIQHNCSRQGPTAPPPPRGPALPGAGSGLPAPDPCDYEGRFSRLHGRPPGFLHCASFGDPHVRSFHHHFHTCRVQGAWPLLDNDFLFVQATSSPMALGANATATRKLTIIFKNMQECIDQKVYQAEVDNLPVAFEDGSINGGDRPGGSSLSIQTANPGNHVEIQAAYIGTTIIIRQTAGQLSFSIKVAEDVAMAFSAEQDLQLCVGGCPPSQRLSRSERNRRGAITIDTARRLCKEGLPVEDAYFHSCVFDVLISGDPNFTVAAQAALEDARAFLPDLEKLHLFPSDAGVPLSSATLLAPLLSGLFVLWLCIQ</sequence>
<gene>
    <name evidence="16" type="primary">HJV</name>
    <name type="synonym">HFE2</name>
    <name type="synonym">RGMC</name>
</gene>
<proteinExistence type="evidence at protein level"/>
<dbReference type="EMBL" id="AY372521">
    <property type="protein sequence ID" value="AAR22390.1"/>
    <property type="molecule type" value="mRNA"/>
</dbReference>
<dbReference type="EMBL" id="AK092682">
    <property type="protein sequence ID" value="BAC03944.1"/>
    <property type="molecule type" value="mRNA"/>
</dbReference>
<dbReference type="EMBL" id="AK124273">
    <property type="protein sequence ID" value="BAC85823.1"/>
    <property type="molecule type" value="mRNA"/>
</dbReference>
<dbReference type="EMBL" id="AK092692">
    <property type="protein sequence ID" value="BAC03947.1"/>
    <property type="molecule type" value="mRNA"/>
</dbReference>
<dbReference type="EMBL" id="AK096905">
    <property type="protein sequence ID" value="BAC04890.1"/>
    <property type="molecule type" value="mRNA"/>
</dbReference>
<dbReference type="EMBL" id="DQ309445">
    <property type="protein sequence ID" value="ABC40718.1"/>
    <property type="molecule type" value="Genomic_DNA"/>
</dbReference>
<dbReference type="EMBL" id="AL355505">
    <property type="protein sequence ID" value="CAI22091.1"/>
    <property type="molecule type" value="Genomic_DNA"/>
</dbReference>
<dbReference type="EMBL" id="AL138842">
    <property type="protein sequence ID" value="CAI22091.1"/>
    <property type="status" value="JOINED"/>
    <property type="molecule type" value="Genomic_DNA"/>
</dbReference>
<dbReference type="EMBL" id="AL138842">
    <property type="protein sequence ID" value="CAI22349.1"/>
    <property type="molecule type" value="Genomic_DNA"/>
</dbReference>
<dbReference type="EMBL" id="AL355505">
    <property type="protein sequence ID" value="CAI22349.1"/>
    <property type="status" value="JOINED"/>
    <property type="molecule type" value="Genomic_DNA"/>
</dbReference>
<dbReference type="EMBL" id="CH471244">
    <property type="protein sequence ID" value="EAW71408.1"/>
    <property type="molecule type" value="Genomic_DNA"/>
</dbReference>
<dbReference type="EMBL" id="BC017926">
    <property type="protein sequence ID" value="AAH17926.1"/>
    <property type="molecule type" value="mRNA"/>
</dbReference>
<dbReference type="EMBL" id="BC085604">
    <property type="protein sequence ID" value="AAH85604.1"/>
    <property type="molecule type" value="mRNA"/>
</dbReference>
<dbReference type="CCDS" id="CCDS72877.1">
    <molecule id="Q6ZVN8-3"/>
</dbReference>
<dbReference type="CCDS" id="CCDS72878.1">
    <molecule id="Q6ZVN8-2"/>
</dbReference>
<dbReference type="CCDS" id="CCDS72879.1">
    <molecule id="Q6ZVN8-1"/>
</dbReference>
<dbReference type="RefSeq" id="NP_001303696.1">
    <molecule id="Q6ZVN8-3"/>
    <property type="nucleotide sequence ID" value="NM_001316767.2"/>
</dbReference>
<dbReference type="RefSeq" id="NP_001366281.1">
    <molecule id="Q6ZVN8-1"/>
    <property type="nucleotide sequence ID" value="NM_001379352.1"/>
</dbReference>
<dbReference type="RefSeq" id="NP_660320.3">
    <molecule id="Q6ZVN8-2"/>
    <property type="nucleotide sequence ID" value="NM_145277.4"/>
</dbReference>
<dbReference type="RefSeq" id="NP_973733.1">
    <molecule id="Q6ZVN8-3"/>
    <property type="nucleotide sequence ID" value="NM_202004.4"/>
</dbReference>
<dbReference type="RefSeq" id="NP_998817.1">
    <molecule id="Q6ZVN8-3"/>
    <property type="nucleotide sequence ID" value="NM_213652.4"/>
</dbReference>
<dbReference type="RefSeq" id="NP_998818.1">
    <molecule id="Q6ZVN8-1"/>
    <property type="nucleotide sequence ID" value="NM_213653.4"/>
</dbReference>
<dbReference type="RefSeq" id="XP_005272989.1">
    <property type="nucleotide sequence ID" value="XM_005272932.1"/>
</dbReference>
<dbReference type="PDB" id="4UI1">
    <property type="method" value="X-ray"/>
    <property type="resolution" value="2.35 A"/>
    <property type="chains" value="C/D=35-145"/>
</dbReference>
<dbReference type="PDB" id="6Z3L">
    <property type="method" value="X-ray"/>
    <property type="resolution" value="2.51 A"/>
    <property type="chains" value="B=36-145"/>
</dbReference>
<dbReference type="PDBsum" id="4UI1"/>
<dbReference type="PDBsum" id="6Z3L"/>
<dbReference type="SMR" id="Q6ZVN8"/>
<dbReference type="BioGRID" id="127164">
    <property type="interactions" value="3"/>
</dbReference>
<dbReference type="CORUM" id="Q6ZVN8"/>
<dbReference type="DIP" id="DIP-61608N"/>
<dbReference type="FunCoup" id="Q6ZVN8">
    <property type="interactions" value="140"/>
</dbReference>
<dbReference type="IntAct" id="Q6ZVN8">
    <property type="interactions" value="5"/>
</dbReference>
<dbReference type="STRING" id="9606.ENSP00000337014"/>
<dbReference type="GlyCosmos" id="Q6ZVN8">
    <property type="glycosylation" value="3 sites, No reported glycans"/>
</dbReference>
<dbReference type="GlyGen" id="Q6ZVN8">
    <property type="glycosylation" value="5 sites, 1 O-linked glycan (1 site)"/>
</dbReference>
<dbReference type="iPTMnet" id="Q6ZVN8"/>
<dbReference type="PhosphoSitePlus" id="Q6ZVN8"/>
<dbReference type="BioMuta" id="HFE2"/>
<dbReference type="DMDM" id="51316254"/>
<dbReference type="MassIVE" id="Q6ZVN8"/>
<dbReference type="PaxDb" id="9606-ENSP00000337014"/>
<dbReference type="PeptideAtlas" id="Q6ZVN8"/>
<dbReference type="ProteomicsDB" id="68433">
    <molecule id="Q6ZVN8-2"/>
</dbReference>
<dbReference type="Antibodypedia" id="2609">
    <property type="antibodies" value="459 antibodies from 30 providers"/>
</dbReference>
<dbReference type="DNASU" id="148738"/>
<dbReference type="Ensembl" id="ENST00000336751.11">
    <molecule id="Q6ZVN8-1"/>
    <property type="protein sequence ID" value="ENSP00000337014.5"/>
    <property type="gene ID" value="ENSG00000168509.20"/>
</dbReference>
<dbReference type="Ensembl" id="ENST00000357836.5">
    <molecule id="Q6ZVN8-2"/>
    <property type="protein sequence ID" value="ENSP00000350495.5"/>
    <property type="gene ID" value="ENSG00000168509.20"/>
</dbReference>
<dbReference type="Ensembl" id="ENST00000475797.1">
    <molecule id="Q6ZVN8-3"/>
    <property type="protein sequence ID" value="ENSP00000425716.1"/>
    <property type="gene ID" value="ENSG00000168509.20"/>
</dbReference>
<dbReference type="Ensembl" id="ENST00000497365.5">
    <molecule id="Q6ZVN8-3"/>
    <property type="protein sequence ID" value="ENSP00000421820.1"/>
    <property type="gene ID" value="ENSG00000168509.20"/>
</dbReference>
<dbReference type="Ensembl" id="ENST00000636675.1">
    <molecule id="Q6ZVN8-3"/>
    <property type="protein sequence ID" value="ENSP00000490072.1"/>
    <property type="gene ID" value="ENSG00000168509.20"/>
</dbReference>
<dbReference type="GeneID" id="148738"/>
<dbReference type="KEGG" id="hsa:148738"/>
<dbReference type="MANE-Select" id="ENST00000336751.11">
    <property type="protein sequence ID" value="ENSP00000337014.5"/>
    <property type="RefSeq nucleotide sequence ID" value="NM_213653.4"/>
    <property type="RefSeq protein sequence ID" value="NP_998818.1"/>
</dbReference>
<dbReference type="UCSC" id="uc001eni.3">
    <molecule id="Q6ZVN8-1"/>
    <property type="organism name" value="human"/>
</dbReference>
<dbReference type="AGR" id="HGNC:4887"/>
<dbReference type="CTD" id="148738"/>
<dbReference type="DisGeNET" id="148738"/>
<dbReference type="GeneCards" id="HJV"/>
<dbReference type="GeneReviews" id="HJV"/>
<dbReference type="HGNC" id="HGNC:4887">
    <property type="gene designation" value="HJV"/>
</dbReference>
<dbReference type="HPA" id="ENSG00000168509">
    <property type="expression patterns" value="Group enriched (liver, skeletal muscle, tongue)"/>
</dbReference>
<dbReference type="MalaCards" id="HJV"/>
<dbReference type="MIM" id="602390">
    <property type="type" value="phenotype"/>
</dbReference>
<dbReference type="MIM" id="608374">
    <property type="type" value="gene"/>
</dbReference>
<dbReference type="neXtProt" id="NX_Q6ZVN8"/>
<dbReference type="OpenTargets" id="ENSG00000168509"/>
<dbReference type="Orphanet" id="648581">
    <property type="disease" value="Digenic hemochromatosis"/>
</dbReference>
<dbReference type="Orphanet" id="79230">
    <property type="disease" value="HJV or HAMP-related hemochromatosis"/>
</dbReference>
<dbReference type="PharmGKB" id="PA29264"/>
<dbReference type="VEuPathDB" id="HostDB:ENSG00000168509"/>
<dbReference type="eggNOG" id="ENOG502QWAZ">
    <property type="taxonomic scope" value="Eukaryota"/>
</dbReference>
<dbReference type="GeneTree" id="ENSGT00950000183112"/>
<dbReference type="HOGENOM" id="CLU_032775_1_1_1"/>
<dbReference type="InParanoid" id="Q6ZVN8"/>
<dbReference type="OMA" id="SYQHCAA"/>
<dbReference type="OrthoDB" id="10013795at2759"/>
<dbReference type="PAN-GO" id="Q6ZVN8">
    <property type="GO annotations" value="3 GO annotations based on evolutionary models"/>
</dbReference>
<dbReference type="PhylomeDB" id="Q6ZVN8"/>
<dbReference type="TreeFam" id="TF329836"/>
<dbReference type="PathwayCommons" id="Q6ZVN8"/>
<dbReference type="Reactome" id="R-HSA-373752">
    <property type="pathway name" value="Netrin-1 signaling"/>
</dbReference>
<dbReference type="SignaLink" id="Q6ZVN8"/>
<dbReference type="BioGRID-ORCS" id="148738">
    <property type="hits" value="42 hits in 1156 CRISPR screens"/>
</dbReference>
<dbReference type="ChiTaRS" id="HFE2">
    <property type="organism name" value="human"/>
</dbReference>
<dbReference type="EvolutionaryTrace" id="Q6ZVN8"/>
<dbReference type="GeneWiki" id="Hemojuvelin"/>
<dbReference type="GenomeRNAi" id="148738"/>
<dbReference type="Pharos" id="Q6ZVN8">
    <property type="development level" value="Tbio"/>
</dbReference>
<dbReference type="PRO" id="PR:Q6ZVN8"/>
<dbReference type="Proteomes" id="UP000005640">
    <property type="component" value="Chromosome 1"/>
</dbReference>
<dbReference type="RNAct" id="Q6ZVN8">
    <property type="molecule type" value="protein"/>
</dbReference>
<dbReference type="Bgee" id="ENSG00000168509">
    <property type="expression patterns" value="Expressed in hindlimb stylopod muscle and 112 other cell types or tissues"/>
</dbReference>
<dbReference type="ExpressionAtlas" id="Q6ZVN8">
    <property type="expression patterns" value="baseline and differential"/>
</dbReference>
<dbReference type="GO" id="GO:0070724">
    <property type="term" value="C:BMP receptor complex"/>
    <property type="evidence" value="ECO:0000314"/>
    <property type="project" value="BHF-UCL"/>
</dbReference>
<dbReference type="GO" id="GO:0009986">
    <property type="term" value="C:cell surface"/>
    <property type="evidence" value="ECO:0007669"/>
    <property type="project" value="Ensembl"/>
</dbReference>
<dbReference type="GO" id="GO:0005615">
    <property type="term" value="C:extracellular space"/>
    <property type="evidence" value="ECO:0000314"/>
    <property type="project" value="UniProtKB"/>
</dbReference>
<dbReference type="GO" id="GO:1990712">
    <property type="term" value="C:HFE-transferrin receptor complex"/>
    <property type="evidence" value="ECO:0000314"/>
    <property type="project" value="BHF-UCL"/>
</dbReference>
<dbReference type="GO" id="GO:0005886">
    <property type="term" value="C:plasma membrane"/>
    <property type="evidence" value="ECO:0000314"/>
    <property type="project" value="MGI"/>
</dbReference>
<dbReference type="GO" id="GO:0098797">
    <property type="term" value="C:plasma membrane protein complex"/>
    <property type="evidence" value="ECO:0000314"/>
    <property type="project" value="BHF-UCL"/>
</dbReference>
<dbReference type="GO" id="GO:0098552">
    <property type="term" value="C:side of membrane"/>
    <property type="evidence" value="ECO:0007669"/>
    <property type="project" value="UniProtKB-KW"/>
</dbReference>
<dbReference type="GO" id="GO:0036122">
    <property type="term" value="F:BMP binding"/>
    <property type="evidence" value="ECO:0000353"/>
    <property type="project" value="BHF-UCL"/>
</dbReference>
<dbReference type="GO" id="GO:0015026">
    <property type="term" value="F:coreceptor activity"/>
    <property type="evidence" value="ECO:0000314"/>
    <property type="project" value="BHF-UCL"/>
</dbReference>
<dbReference type="GO" id="GO:0005102">
    <property type="term" value="F:signaling receptor binding"/>
    <property type="evidence" value="ECO:0000353"/>
    <property type="project" value="BHF-UCL"/>
</dbReference>
<dbReference type="GO" id="GO:1990459">
    <property type="term" value="F:transferrin receptor binding"/>
    <property type="evidence" value="ECO:0000353"/>
    <property type="project" value="BHF-UCL"/>
</dbReference>
<dbReference type="GO" id="GO:0032924">
    <property type="term" value="P:activin receptor signaling pathway"/>
    <property type="evidence" value="ECO:0000316"/>
    <property type="project" value="BHF-UCL"/>
</dbReference>
<dbReference type="GO" id="GO:0030509">
    <property type="term" value="P:BMP signaling pathway"/>
    <property type="evidence" value="ECO:0000315"/>
    <property type="project" value="BHF-UCL"/>
</dbReference>
<dbReference type="GO" id="GO:0071773">
    <property type="term" value="P:cellular response to BMP stimulus"/>
    <property type="evidence" value="ECO:0000315"/>
    <property type="project" value="BHF-UCL"/>
</dbReference>
<dbReference type="GO" id="GO:0006879">
    <property type="term" value="P:intracellular iron ion homeostasis"/>
    <property type="evidence" value="ECO:0000250"/>
    <property type="project" value="BHF-UCL"/>
</dbReference>
<dbReference type="GO" id="GO:0060586">
    <property type="term" value="P:multicellular organismal-level iron ion homeostasis"/>
    <property type="evidence" value="ECO:0000314"/>
    <property type="project" value="MGI"/>
</dbReference>
<dbReference type="GO" id="GO:0030514">
    <property type="term" value="P:negative regulation of BMP signaling pathway"/>
    <property type="evidence" value="ECO:0007669"/>
    <property type="project" value="Ensembl"/>
</dbReference>
<dbReference type="GO" id="GO:0000122">
    <property type="term" value="P:negative regulation of transcription by RNA polymerase II"/>
    <property type="evidence" value="ECO:0000250"/>
    <property type="project" value="BHF-UCL"/>
</dbReference>
<dbReference type="GO" id="GO:0045944">
    <property type="term" value="P:positive regulation of transcription by RNA polymerase II"/>
    <property type="evidence" value="ECO:0000314"/>
    <property type="project" value="BHF-UCL"/>
</dbReference>
<dbReference type="GO" id="GO:0016540">
    <property type="term" value="P:protein autoprocessing"/>
    <property type="evidence" value="ECO:0000315"/>
    <property type="project" value="BHF-UCL"/>
</dbReference>
<dbReference type="GO" id="GO:0006366">
    <property type="term" value="P:transcription by RNA polymerase II"/>
    <property type="evidence" value="ECO:0007669"/>
    <property type="project" value="Ensembl"/>
</dbReference>
<dbReference type="DisProt" id="DP02661"/>
<dbReference type="FunFam" id="3.40.1000.10:FF:000003">
    <property type="entry name" value="hemojuvelin isoform X1"/>
    <property type="match status" value="1"/>
</dbReference>
<dbReference type="Gene3D" id="3.40.1000.10">
    <property type="entry name" value="Mog1/PsbP, alpha/beta/alpha sandwich"/>
    <property type="match status" value="1"/>
</dbReference>
<dbReference type="InterPro" id="IPR040287">
    <property type="entry name" value="RGM"/>
</dbReference>
<dbReference type="InterPro" id="IPR009496">
    <property type="entry name" value="RGM_C"/>
</dbReference>
<dbReference type="InterPro" id="IPR010536">
    <property type="entry name" value="RGM_N"/>
</dbReference>
<dbReference type="PANTHER" id="PTHR31428:SF3">
    <property type="entry name" value="HEMOJUVELIN"/>
    <property type="match status" value="1"/>
</dbReference>
<dbReference type="PANTHER" id="PTHR31428">
    <property type="entry name" value="RGM DOMAIN FAMILY MEMBER DRAG-1"/>
    <property type="match status" value="1"/>
</dbReference>
<dbReference type="Pfam" id="PF06534">
    <property type="entry name" value="RGM_C"/>
    <property type="match status" value="1"/>
</dbReference>
<dbReference type="Pfam" id="PF06535">
    <property type="entry name" value="RGM_N"/>
    <property type="match status" value="1"/>
</dbReference>
<evidence type="ECO:0000250" key="1"/>
<evidence type="ECO:0000250" key="2">
    <source>
        <dbReference type="UniProtKB" id="Q7TQ32"/>
    </source>
</evidence>
<evidence type="ECO:0000255" key="3"/>
<evidence type="ECO:0000256" key="4">
    <source>
        <dbReference type="SAM" id="MobiDB-lite"/>
    </source>
</evidence>
<evidence type="ECO:0000269" key="5">
    <source>
    </source>
</evidence>
<evidence type="ECO:0000269" key="6">
    <source>
    </source>
</evidence>
<evidence type="ECO:0000269" key="7">
    <source>
    </source>
</evidence>
<evidence type="ECO:0000269" key="8">
    <source>
    </source>
</evidence>
<evidence type="ECO:0000269" key="9">
    <source>
    </source>
</evidence>
<evidence type="ECO:0000269" key="10">
    <source>
    </source>
</evidence>
<evidence type="ECO:0000269" key="11">
    <source>
    </source>
</evidence>
<evidence type="ECO:0000269" key="12">
    <source>
    </source>
</evidence>
<evidence type="ECO:0000303" key="13">
    <source>
    </source>
</evidence>
<evidence type="ECO:0000303" key="14">
    <source>
    </source>
</evidence>
<evidence type="ECO:0000305" key="15"/>
<evidence type="ECO:0000312" key="16">
    <source>
        <dbReference type="HGNC" id="HGNC:4887"/>
    </source>
</evidence>
<evidence type="ECO:0007829" key="17">
    <source>
        <dbReference type="PDB" id="4UI1"/>
    </source>
</evidence>
<comment type="function">
    <text evidence="10">Acts as a bone morphogenetic protein (BMP) coreceptor (PubMed:18976966). Through enhancement of BMP signaling regulates hepcidin (HAMP) expression and regulates iron homeostasis (PubMed:18976966).</text>
</comment>
<comment type="subunit">
    <text evidence="2 9 10 11">Interacts with BMP2 and BMP4 (By similarity). Interacts with BMP6 (By similarity). Interacts with BMPR1B (PubMed:16604073). Interacts with TMPRSS6 (PubMed:18976966, PubMed:19357398).</text>
</comment>
<comment type="interaction">
    <interactant intactId="EBI-10900704">
        <id>Q6ZVN8</id>
    </interactant>
    <interactant intactId="EBI-1029262">
        <id>P12643</id>
        <label>BMP2</label>
    </interactant>
    <organismsDiffer>false</organismsDiffer>
    <experiments>2</experiments>
</comment>
<comment type="interaction">
    <interactant intactId="EBI-10900704">
        <id>Q6ZVN8</id>
    </interactant>
    <interactant intactId="EBI-2829116">
        <id>Q92859</id>
        <label>NEO1</label>
    </interactant>
    <organismsDiffer>false</organismsDiffer>
    <experiments>3</experiments>
</comment>
<comment type="interaction">
    <interactant intactId="EBI-10900704">
        <id>Q6ZVN8</id>
    </interactant>
    <interactant intactId="EBI-11686560">
        <id>Q8IU80-4</id>
        <label>TMPRSS6</label>
    </interactant>
    <organismsDiffer>false</organismsDiffer>
    <experiments>3</experiments>
</comment>
<comment type="interaction">
    <interactant intactId="EBI-16155543">
        <id>Q6ZVN8-1</id>
    </interactant>
    <interactant intactId="EBI-1029262">
        <id>P12643</id>
        <label>BMP2</label>
    </interactant>
    <organismsDiffer>false</organismsDiffer>
    <experiments>2</experiments>
</comment>
<comment type="interaction">
    <interactant intactId="EBI-12827977">
        <id>Q6ZVN8-3</id>
    </interactant>
    <interactant intactId="EBI-1045825">
        <id>P55061</id>
        <label>TMBIM6</label>
    </interactant>
    <organismsDiffer>false</organismsDiffer>
    <experiments>3</experiments>
</comment>
<comment type="subcellular location">
    <subcellularLocation>
        <location evidence="1">Cell membrane</location>
        <topology evidence="1">Lipid-anchor</topology>
        <topology evidence="1">GPI-anchor</topology>
    </subcellularLocation>
    <text evidence="12">Also released in the extracellular space.</text>
</comment>
<comment type="alternative products">
    <event type="alternative splicing"/>
    <isoform>
        <id>Q6ZVN8-1</id>
        <name>a</name>
        <sequence type="displayed"/>
    </isoform>
    <isoform>
        <id>Q6ZVN8-2</id>
        <name>b</name>
        <sequence type="described" ref="VSP_011319"/>
    </isoform>
    <isoform>
        <id>Q6ZVN8-3</id>
        <name>c</name>
        <sequence type="described" ref="VSP_011320"/>
    </isoform>
</comment>
<comment type="tissue specificity">
    <text evidence="5">Adult and fetal liver, heart, and skeletal muscle.</text>
</comment>
<comment type="PTM">
    <text evidence="10 12">Autocatalytically cleaved at low pH; the two chains remain linked via two disulfide bonds (PubMed:25156943). Also proteolytically processed by TMPRSS6, several fragments being released in the extracellular space; regulates HJV activity in BMP signaling and thefore iron homeostasis (PubMed:18976966, PubMed:25156943).</text>
</comment>
<comment type="disease" evidence="5 6 7 8">
    <disease id="DI-01699">
        <name>Hemochromatosis 2A</name>
        <acronym>HFE2A</acronym>
        <description>A juvenile form of hemochromatosis, a disorder of iron metabolism with excess deposition of iron in a variety of organs leading to their failure, bronze skin pigmentation, hepatic cirrhosis, arthropathy and diabetes. The most common symptoms of juvenile hemochromatosis at presentation are hypogonadism and cardiomyopathy.</description>
        <dbReference type="MIM" id="602390"/>
    </disease>
    <text>The disease is caused by variants affecting the gene represented in this entry.</text>
</comment>
<comment type="similarity">
    <text evidence="15">Belongs to the repulsive guidance molecule (RGM) family.</text>
</comment>
<accession>Q6ZVN8</accession>
<accession>B1ALI7</accession>
<accession>Q2PQ63</accession>
<accession>Q6IMF6</accession>
<accession>Q8NAH2</accession>
<accession>Q8WVJ5</accession>
<keyword id="KW-0002">3D-structure</keyword>
<keyword id="KW-0025">Alternative splicing</keyword>
<keyword id="KW-0068">Autocatalytic cleavage</keyword>
<keyword id="KW-1003">Cell membrane</keyword>
<keyword id="KW-0225">Disease variant</keyword>
<keyword id="KW-1015">Disulfide bond</keyword>
<keyword id="KW-0325">Glycoprotein</keyword>
<keyword id="KW-0336">GPI-anchor</keyword>
<keyword id="KW-0449">Lipoprotein</keyword>
<keyword id="KW-0472">Membrane</keyword>
<keyword id="KW-0597">Phosphoprotein</keyword>
<keyword id="KW-1267">Proteomics identification</keyword>
<keyword id="KW-1185">Reference proteome</keyword>
<keyword id="KW-0732">Signal</keyword>
<organism>
    <name type="scientific">Homo sapiens</name>
    <name type="common">Human</name>
    <dbReference type="NCBI Taxonomy" id="9606"/>
    <lineage>
        <taxon>Eukaryota</taxon>
        <taxon>Metazoa</taxon>
        <taxon>Chordata</taxon>
        <taxon>Craniata</taxon>
        <taxon>Vertebrata</taxon>
        <taxon>Euteleostomi</taxon>
        <taxon>Mammalia</taxon>
        <taxon>Eutheria</taxon>
        <taxon>Euarchontoglires</taxon>
        <taxon>Primates</taxon>
        <taxon>Haplorrhini</taxon>
        <taxon>Catarrhini</taxon>
        <taxon>Hominidae</taxon>
        <taxon>Homo</taxon>
    </lineage>
</organism>
<protein>
    <recommendedName>
        <fullName evidence="15">Hemojuvelin</fullName>
    </recommendedName>
    <alternativeName>
        <fullName>Hemochromatosis type 2 protein</fullName>
    </alternativeName>
    <alternativeName>
        <fullName evidence="15">Hemojuvelin BMP coreceptor</fullName>
    </alternativeName>
    <alternativeName>
        <fullName>RGM domain family member C</fullName>
    </alternativeName>
</protein>